<protein>
    <recommendedName>
        <fullName evidence="1">Sugar fermentation stimulation protein homolog</fullName>
    </recommendedName>
</protein>
<evidence type="ECO:0000255" key="1">
    <source>
        <dbReference type="HAMAP-Rule" id="MF_00095"/>
    </source>
</evidence>
<accession>C3KXT3</accession>
<feature type="chain" id="PRO_1000202718" description="Sugar fermentation stimulation protein homolog">
    <location>
        <begin position="1"/>
        <end position="230"/>
    </location>
</feature>
<reference key="1">
    <citation type="submission" date="2008-05" db="EMBL/GenBank/DDBJ databases">
        <title>Genome sequence of Clostridium botulinum Ba4 strain 657.</title>
        <authorList>
            <person name="Shrivastava S."/>
            <person name="Brown J.L."/>
            <person name="Bruce D."/>
            <person name="Detter C."/>
            <person name="Munk C."/>
            <person name="Smith L.A."/>
            <person name="Smith T.J."/>
            <person name="Sutton G."/>
            <person name="Brettin T.S."/>
        </authorList>
    </citation>
    <scope>NUCLEOTIDE SEQUENCE [LARGE SCALE GENOMIC DNA]</scope>
    <source>
        <strain>657 / Type Ba4</strain>
    </source>
</reference>
<organism>
    <name type="scientific">Clostridium botulinum (strain 657 / Type Ba4)</name>
    <dbReference type="NCBI Taxonomy" id="515621"/>
    <lineage>
        <taxon>Bacteria</taxon>
        <taxon>Bacillati</taxon>
        <taxon>Bacillota</taxon>
        <taxon>Clostridia</taxon>
        <taxon>Eubacteriales</taxon>
        <taxon>Clostridiaceae</taxon>
        <taxon>Clostridium</taxon>
    </lineage>
</organism>
<proteinExistence type="inferred from homology"/>
<sequence>MKITKNILKAEFIKRPNRFQAYVKINEKIEMVHVPNTGRCKEILIPGSTVILREENNENRKTRYDLIAGYKGDMLISIDSQIPNKVVYEALMNFKIEILKEYTNIKREKTFGKSRFDFKLEKENGEVYYLEVKGVTLENDGLTMFPDAPTERGTKHILELIDVKNKGMGAGVLFLIQLNGVKKFTPNHKMDKNFGEALRLAKEKGVDILAYDCLVEESSISLNNPVSIEI</sequence>
<name>SFSA_CLOB6</name>
<dbReference type="EMBL" id="CP001083">
    <property type="protein sequence ID" value="ACQ54616.1"/>
    <property type="molecule type" value="Genomic_DNA"/>
</dbReference>
<dbReference type="RefSeq" id="WP_003359481.1">
    <property type="nucleotide sequence ID" value="NC_012658.1"/>
</dbReference>
<dbReference type="SMR" id="C3KXT3"/>
<dbReference type="KEGG" id="cbi:CLJ_B0041"/>
<dbReference type="HOGENOM" id="CLU_052299_1_0_9"/>
<dbReference type="Proteomes" id="UP000002333">
    <property type="component" value="Chromosome"/>
</dbReference>
<dbReference type="GO" id="GO:0003677">
    <property type="term" value="F:DNA binding"/>
    <property type="evidence" value="ECO:0007669"/>
    <property type="project" value="InterPro"/>
</dbReference>
<dbReference type="CDD" id="cd22359">
    <property type="entry name" value="SfsA-like_bacterial"/>
    <property type="match status" value="1"/>
</dbReference>
<dbReference type="FunFam" id="2.40.50.580:FF:000002">
    <property type="entry name" value="Sugar fermentation stimulation protein homolog"/>
    <property type="match status" value="1"/>
</dbReference>
<dbReference type="FunFam" id="3.40.1350.60:FF:000002">
    <property type="entry name" value="Sugar fermentation stimulation protein homolog"/>
    <property type="match status" value="1"/>
</dbReference>
<dbReference type="Gene3D" id="2.40.50.580">
    <property type="match status" value="1"/>
</dbReference>
<dbReference type="Gene3D" id="3.40.1350.60">
    <property type="match status" value="1"/>
</dbReference>
<dbReference type="HAMAP" id="MF_00095">
    <property type="entry name" value="SfsA"/>
    <property type="match status" value="1"/>
</dbReference>
<dbReference type="InterPro" id="IPR005224">
    <property type="entry name" value="SfsA"/>
</dbReference>
<dbReference type="InterPro" id="IPR040452">
    <property type="entry name" value="SfsA_C"/>
</dbReference>
<dbReference type="InterPro" id="IPR041465">
    <property type="entry name" value="SfsA_N"/>
</dbReference>
<dbReference type="NCBIfam" id="TIGR00230">
    <property type="entry name" value="sfsA"/>
    <property type="match status" value="1"/>
</dbReference>
<dbReference type="PANTHER" id="PTHR30545">
    <property type="entry name" value="SUGAR FERMENTATION STIMULATION PROTEIN A"/>
    <property type="match status" value="1"/>
</dbReference>
<dbReference type="PANTHER" id="PTHR30545:SF2">
    <property type="entry name" value="SUGAR FERMENTATION STIMULATION PROTEIN A"/>
    <property type="match status" value="1"/>
</dbReference>
<dbReference type="Pfam" id="PF03749">
    <property type="entry name" value="SfsA"/>
    <property type="match status" value="1"/>
</dbReference>
<dbReference type="Pfam" id="PF17746">
    <property type="entry name" value="SfsA_N"/>
    <property type="match status" value="1"/>
</dbReference>
<gene>
    <name evidence="1" type="primary">sfsA</name>
    <name type="ordered locus">CLJ_B0041</name>
</gene>
<comment type="similarity">
    <text evidence="1">Belongs to the SfsA family.</text>
</comment>